<organism>
    <name type="scientific">Streptococcus pyogenes serotype M2 (strain MGAS10270)</name>
    <dbReference type="NCBI Taxonomy" id="370552"/>
    <lineage>
        <taxon>Bacteria</taxon>
        <taxon>Bacillati</taxon>
        <taxon>Bacillota</taxon>
        <taxon>Bacilli</taxon>
        <taxon>Lactobacillales</taxon>
        <taxon>Streptococcaceae</taxon>
        <taxon>Streptococcus</taxon>
    </lineage>
</organism>
<protein>
    <recommendedName>
        <fullName evidence="1">Small ribosomal subunit protein uS19</fullName>
    </recommendedName>
    <alternativeName>
        <fullName evidence="2">30S ribosomal protein S19</fullName>
    </alternativeName>
</protein>
<feature type="chain" id="PRO_0000265444" description="Small ribosomal subunit protein uS19">
    <location>
        <begin position="1"/>
        <end position="92"/>
    </location>
</feature>
<accession>Q1JJ58</accession>
<comment type="function">
    <text evidence="1">Protein S19 forms a complex with S13 that binds strongly to the 16S ribosomal RNA.</text>
</comment>
<comment type="similarity">
    <text evidence="1">Belongs to the universal ribosomal protein uS19 family.</text>
</comment>
<comment type="sequence caution" evidence="2">
    <conflict type="erroneous initiation">
        <sequence resource="EMBL-CDS" id="ABF33115"/>
    </conflict>
</comment>
<reference key="1">
    <citation type="journal article" date="2006" name="Proc. Natl. Acad. Sci. U.S.A.">
        <title>Molecular genetic anatomy of inter- and intraserotype variation in the human bacterial pathogen group A Streptococcus.</title>
        <authorList>
            <person name="Beres S.B."/>
            <person name="Richter E.W."/>
            <person name="Nagiec M.J."/>
            <person name="Sumby P."/>
            <person name="Porcella S.F."/>
            <person name="DeLeo F.R."/>
            <person name="Musser J.M."/>
        </authorList>
    </citation>
    <scope>NUCLEOTIDE SEQUENCE [LARGE SCALE GENOMIC DNA]</scope>
    <source>
        <strain>MGAS10270</strain>
    </source>
</reference>
<name>RS19_STRPD</name>
<keyword id="KW-0687">Ribonucleoprotein</keyword>
<keyword id="KW-0689">Ribosomal protein</keyword>
<keyword id="KW-0694">RNA-binding</keyword>
<keyword id="KW-0699">rRNA-binding</keyword>
<proteinExistence type="inferred from homology"/>
<evidence type="ECO:0000255" key="1">
    <source>
        <dbReference type="HAMAP-Rule" id="MF_00531"/>
    </source>
</evidence>
<evidence type="ECO:0000305" key="2"/>
<sequence length="92" mass="10622">MGRSLKKGPFVDEHLMKKVEAQANDEKKKVIKTWSRRSTIFPSFIGYTIAVYDGRKHVPVYIQEDMVGHKLGEFAPTRTYKGHAADDKKTRR</sequence>
<dbReference type="EMBL" id="CP000260">
    <property type="protein sequence ID" value="ABF33115.1"/>
    <property type="status" value="ALT_INIT"/>
    <property type="molecule type" value="Genomic_DNA"/>
</dbReference>
<dbReference type="RefSeq" id="WP_000533765.1">
    <property type="nucleotide sequence ID" value="NZ_CVUH01000001.1"/>
</dbReference>
<dbReference type="SMR" id="Q1JJ58"/>
<dbReference type="GeneID" id="98392396"/>
<dbReference type="KEGG" id="sph:MGAS10270_Spy0050"/>
<dbReference type="HOGENOM" id="CLU_144911_0_0_9"/>
<dbReference type="Proteomes" id="UP000002436">
    <property type="component" value="Chromosome"/>
</dbReference>
<dbReference type="GO" id="GO:0005737">
    <property type="term" value="C:cytoplasm"/>
    <property type="evidence" value="ECO:0007669"/>
    <property type="project" value="UniProtKB-ARBA"/>
</dbReference>
<dbReference type="GO" id="GO:0015935">
    <property type="term" value="C:small ribosomal subunit"/>
    <property type="evidence" value="ECO:0007669"/>
    <property type="project" value="InterPro"/>
</dbReference>
<dbReference type="GO" id="GO:0019843">
    <property type="term" value="F:rRNA binding"/>
    <property type="evidence" value="ECO:0007669"/>
    <property type="project" value="UniProtKB-UniRule"/>
</dbReference>
<dbReference type="GO" id="GO:0003735">
    <property type="term" value="F:structural constituent of ribosome"/>
    <property type="evidence" value="ECO:0007669"/>
    <property type="project" value="InterPro"/>
</dbReference>
<dbReference type="GO" id="GO:0000028">
    <property type="term" value="P:ribosomal small subunit assembly"/>
    <property type="evidence" value="ECO:0007669"/>
    <property type="project" value="TreeGrafter"/>
</dbReference>
<dbReference type="GO" id="GO:0006412">
    <property type="term" value="P:translation"/>
    <property type="evidence" value="ECO:0007669"/>
    <property type="project" value="UniProtKB-UniRule"/>
</dbReference>
<dbReference type="FunFam" id="3.30.860.10:FF:000001">
    <property type="entry name" value="30S ribosomal protein S19"/>
    <property type="match status" value="1"/>
</dbReference>
<dbReference type="Gene3D" id="3.30.860.10">
    <property type="entry name" value="30s Ribosomal Protein S19, Chain A"/>
    <property type="match status" value="1"/>
</dbReference>
<dbReference type="HAMAP" id="MF_00531">
    <property type="entry name" value="Ribosomal_uS19"/>
    <property type="match status" value="1"/>
</dbReference>
<dbReference type="InterPro" id="IPR002222">
    <property type="entry name" value="Ribosomal_uS19"/>
</dbReference>
<dbReference type="InterPro" id="IPR005732">
    <property type="entry name" value="Ribosomal_uS19_bac-type"/>
</dbReference>
<dbReference type="InterPro" id="IPR020934">
    <property type="entry name" value="Ribosomal_uS19_CS"/>
</dbReference>
<dbReference type="InterPro" id="IPR023575">
    <property type="entry name" value="Ribosomal_uS19_SF"/>
</dbReference>
<dbReference type="NCBIfam" id="TIGR01050">
    <property type="entry name" value="rpsS_bact"/>
    <property type="match status" value="1"/>
</dbReference>
<dbReference type="PANTHER" id="PTHR11880">
    <property type="entry name" value="RIBOSOMAL PROTEIN S19P FAMILY MEMBER"/>
    <property type="match status" value="1"/>
</dbReference>
<dbReference type="PANTHER" id="PTHR11880:SF8">
    <property type="entry name" value="SMALL RIBOSOMAL SUBUNIT PROTEIN US19M"/>
    <property type="match status" value="1"/>
</dbReference>
<dbReference type="Pfam" id="PF00203">
    <property type="entry name" value="Ribosomal_S19"/>
    <property type="match status" value="1"/>
</dbReference>
<dbReference type="PIRSF" id="PIRSF002144">
    <property type="entry name" value="Ribosomal_S19"/>
    <property type="match status" value="1"/>
</dbReference>
<dbReference type="PRINTS" id="PR00975">
    <property type="entry name" value="RIBOSOMALS19"/>
</dbReference>
<dbReference type="SUPFAM" id="SSF54570">
    <property type="entry name" value="Ribosomal protein S19"/>
    <property type="match status" value="1"/>
</dbReference>
<dbReference type="PROSITE" id="PS00323">
    <property type="entry name" value="RIBOSOMAL_S19"/>
    <property type="match status" value="1"/>
</dbReference>
<gene>
    <name evidence="1" type="primary">rpsS</name>
    <name type="ordered locus">MGAS10270_Spy0050</name>
</gene>